<keyword id="KW-1185">Reference proteome</keyword>
<keyword id="KW-0687">Ribonucleoprotein</keyword>
<keyword id="KW-0689">Ribosomal protein</keyword>
<proteinExistence type="inferred from homology"/>
<protein>
    <recommendedName>
        <fullName evidence="1">Small ribosomal subunit protein bS16</fullName>
    </recommendedName>
    <alternativeName>
        <fullName evidence="2">30S ribosomal protein S16</fullName>
    </alternativeName>
</protein>
<reference key="1">
    <citation type="journal article" date="2002" name="Proc. Natl. Acad. Sci. U.S.A.">
        <title>Complete genome sequence and comparative genomic analysis of an emerging human pathogen, serotype V Streptococcus agalactiae.</title>
        <authorList>
            <person name="Tettelin H."/>
            <person name="Masignani V."/>
            <person name="Cieslewicz M.J."/>
            <person name="Eisen J.A."/>
            <person name="Peterson S.N."/>
            <person name="Wessels M.R."/>
            <person name="Paulsen I.T."/>
            <person name="Nelson K.E."/>
            <person name="Margarit I."/>
            <person name="Read T.D."/>
            <person name="Madoff L.C."/>
            <person name="Wolf A.M."/>
            <person name="Beanan M.J."/>
            <person name="Brinkac L.M."/>
            <person name="Daugherty S.C."/>
            <person name="DeBoy R.T."/>
            <person name="Durkin A.S."/>
            <person name="Kolonay J.F."/>
            <person name="Madupu R."/>
            <person name="Lewis M.R."/>
            <person name="Radune D."/>
            <person name="Fedorova N.B."/>
            <person name="Scanlan D."/>
            <person name="Khouri H.M."/>
            <person name="Mulligan S."/>
            <person name="Carty H.A."/>
            <person name="Cline R.T."/>
            <person name="Van Aken S.E."/>
            <person name="Gill J."/>
            <person name="Scarselli M."/>
            <person name="Mora M."/>
            <person name="Iacobini E.T."/>
            <person name="Brettoni C."/>
            <person name="Galli G."/>
            <person name="Mariani M."/>
            <person name="Vegni F."/>
            <person name="Maione D."/>
            <person name="Rinaudo D."/>
            <person name="Rappuoli R."/>
            <person name="Telford J.L."/>
            <person name="Kasper D.L."/>
            <person name="Grandi G."/>
            <person name="Fraser C.M."/>
        </authorList>
    </citation>
    <scope>NUCLEOTIDE SEQUENCE [LARGE SCALE GENOMIC DNA]</scope>
    <source>
        <strain>ATCC BAA-611 / 2603 V/R</strain>
    </source>
</reference>
<gene>
    <name evidence="1" type="primary">rpsP</name>
    <name type="ordered locus">SAG1358</name>
</gene>
<evidence type="ECO:0000255" key="1">
    <source>
        <dbReference type="HAMAP-Rule" id="MF_00385"/>
    </source>
</evidence>
<evidence type="ECO:0000305" key="2"/>
<organism>
    <name type="scientific">Streptococcus agalactiae serotype V (strain ATCC BAA-611 / 2603 V/R)</name>
    <dbReference type="NCBI Taxonomy" id="208435"/>
    <lineage>
        <taxon>Bacteria</taxon>
        <taxon>Bacillati</taxon>
        <taxon>Bacillota</taxon>
        <taxon>Bacilli</taxon>
        <taxon>Lactobacillales</taxon>
        <taxon>Streptococcaceae</taxon>
        <taxon>Streptococcus</taxon>
    </lineage>
</organism>
<accession>P66443</accession>
<accession>Q8DYW5</accession>
<accession>Q8E4H3</accession>
<feature type="chain" id="PRO_0000167252" description="Small ribosomal subunit protein bS16">
    <location>
        <begin position="1"/>
        <end position="90"/>
    </location>
</feature>
<comment type="similarity">
    <text evidence="1">Belongs to the bacterial ribosomal protein bS16 family.</text>
</comment>
<sequence>MAVKIRLTRMGSKKKPFYRINVADSRAPRDGRFIETVGTYNPLVAENQVTIKEERVLEWLSKGAQPSDTVRNLLSKAGVMTKFHDQKFSK</sequence>
<dbReference type="EMBL" id="AE009948">
    <property type="protein sequence ID" value="AAN00229.1"/>
    <property type="molecule type" value="Genomic_DNA"/>
</dbReference>
<dbReference type="RefSeq" id="NP_688356.1">
    <property type="nucleotide sequence ID" value="NC_004116.1"/>
</dbReference>
<dbReference type="RefSeq" id="WP_000268757.1">
    <property type="nucleotide sequence ID" value="NC_004116.1"/>
</dbReference>
<dbReference type="SMR" id="P66443"/>
<dbReference type="STRING" id="208435.SAG1358"/>
<dbReference type="GeneID" id="66886224"/>
<dbReference type="KEGG" id="sag:SAG1358"/>
<dbReference type="PATRIC" id="fig|208435.3.peg.1366"/>
<dbReference type="HOGENOM" id="CLU_100590_5_0_9"/>
<dbReference type="OrthoDB" id="9807878at2"/>
<dbReference type="Proteomes" id="UP000000821">
    <property type="component" value="Chromosome"/>
</dbReference>
<dbReference type="GO" id="GO:0005737">
    <property type="term" value="C:cytoplasm"/>
    <property type="evidence" value="ECO:0007669"/>
    <property type="project" value="UniProtKB-ARBA"/>
</dbReference>
<dbReference type="GO" id="GO:0015935">
    <property type="term" value="C:small ribosomal subunit"/>
    <property type="evidence" value="ECO:0007669"/>
    <property type="project" value="TreeGrafter"/>
</dbReference>
<dbReference type="GO" id="GO:0003735">
    <property type="term" value="F:structural constituent of ribosome"/>
    <property type="evidence" value="ECO:0007669"/>
    <property type="project" value="InterPro"/>
</dbReference>
<dbReference type="GO" id="GO:0006412">
    <property type="term" value="P:translation"/>
    <property type="evidence" value="ECO:0007669"/>
    <property type="project" value="UniProtKB-UniRule"/>
</dbReference>
<dbReference type="FunFam" id="3.30.1320.10:FF:000002">
    <property type="entry name" value="30S ribosomal protein S16"/>
    <property type="match status" value="1"/>
</dbReference>
<dbReference type="Gene3D" id="3.30.1320.10">
    <property type="match status" value="1"/>
</dbReference>
<dbReference type="HAMAP" id="MF_00385">
    <property type="entry name" value="Ribosomal_bS16"/>
    <property type="match status" value="1"/>
</dbReference>
<dbReference type="InterPro" id="IPR000307">
    <property type="entry name" value="Ribosomal_bS16"/>
</dbReference>
<dbReference type="InterPro" id="IPR023803">
    <property type="entry name" value="Ribosomal_bS16_dom_sf"/>
</dbReference>
<dbReference type="NCBIfam" id="TIGR00002">
    <property type="entry name" value="S16"/>
    <property type="match status" value="1"/>
</dbReference>
<dbReference type="PANTHER" id="PTHR12919">
    <property type="entry name" value="30S RIBOSOMAL PROTEIN S16"/>
    <property type="match status" value="1"/>
</dbReference>
<dbReference type="PANTHER" id="PTHR12919:SF20">
    <property type="entry name" value="SMALL RIBOSOMAL SUBUNIT PROTEIN BS16M"/>
    <property type="match status" value="1"/>
</dbReference>
<dbReference type="Pfam" id="PF00886">
    <property type="entry name" value="Ribosomal_S16"/>
    <property type="match status" value="1"/>
</dbReference>
<dbReference type="SUPFAM" id="SSF54565">
    <property type="entry name" value="Ribosomal protein S16"/>
    <property type="match status" value="1"/>
</dbReference>
<name>RS16_STRA5</name>